<keyword id="KW-0687">Ribonucleoprotein</keyword>
<keyword id="KW-0689">Ribosomal protein</keyword>
<keyword id="KW-0694">RNA-binding</keyword>
<keyword id="KW-0699">rRNA-binding</keyword>
<proteinExistence type="inferred from homology"/>
<organism>
    <name type="scientific">Colwellia psychrerythraea (strain 34H / ATCC BAA-681)</name>
    <name type="common">Vibrio psychroerythus</name>
    <dbReference type="NCBI Taxonomy" id="167879"/>
    <lineage>
        <taxon>Bacteria</taxon>
        <taxon>Pseudomonadati</taxon>
        <taxon>Pseudomonadota</taxon>
        <taxon>Gammaproteobacteria</taxon>
        <taxon>Alteromonadales</taxon>
        <taxon>Colwelliaceae</taxon>
        <taxon>Colwellia</taxon>
    </lineage>
</organism>
<gene>
    <name evidence="1" type="primary">rplB</name>
    <name type="ordered locus">CPS_0870</name>
</gene>
<comment type="function">
    <text evidence="1">One of the primary rRNA binding proteins. Required for association of the 30S and 50S subunits to form the 70S ribosome, for tRNA binding and peptide bond formation. It has been suggested to have peptidyltransferase activity; this is somewhat controversial. Makes several contacts with the 16S rRNA in the 70S ribosome.</text>
</comment>
<comment type="subunit">
    <text evidence="1">Part of the 50S ribosomal subunit. Forms a bridge to the 30S subunit in the 70S ribosome.</text>
</comment>
<comment type="similarity">
    <text evidence="1">Belongs to the universal ribosomal protein uL2 family.</text>
</comment>
<sequence>MAIVKCKPTSPGRRHLVKVVNKELHTGKPYAPLLDTKSKSGGRNNNGRITVRHIGGGHKQHYRIVDFKRLKDGIPAKVERLEYDPNRSANIALVLYADGERRYILAPKGLSAGDSILSGVGAPIKPGNTMPLRNIPLGSVIHAIELKPGKGAQIARAAGTYAQLVAKDGAYVTLRLRSGEMRKIESDCRATLGEIGNSEHMLRSLGKAGASRWRGVRPTVRGVAMNPVDHPHGGGEGKTSGGRHPVSPWGVPTKGYKTRSNKRTDKFIVRRRAK</sequence>
<name>RL2_COLP3</name>
<dbReference type="EMBL" id="CP000083">
    <property type="protein sequence ID" value="AAZ25717.1"/>
    <property type="molecule type" value="Genomic_DNA"/>
</dbReference>
<dbReference type="RefSeq" id="WP_011041719.1">
    <property type="nucleotide sequence ID" value="NC_003910.7"/>
</dbReference>
<dbReference type="SMR" id="Q487Z6"/>
<dbReference type="STRING" id="167879.CPS_0870"/>
<dbReference type="KEGG" id="cps:CPS_0870"/>
<dbReference type="eggNOG" id="COG0090">
    <property type="taxonomic scope" value="Bacteria"/>
</dbReference>
<dbReference type="HOGENOM" id="CLU_036235_2_1_6"/>
<dbReference type="Proteomes" id="UP000000547">
    <property type="component" value="Chromosome"/>
</dbReference>
<dbReference type="GO" id="GO:0015934">
    <property type="term" value="C:large ribosomal subunit"/>
    <property type="evidence" value="ECO:0007669"/>
    <property type="project" value="InterPro"/>
</dbReference>
<dbReference type="GO" id="GO:0019843">
    <property type="term" value="F:rRNA binding"/>
    <property type="evidence" value="ECO:0007669"/>
    <property type="project" value="UniProtKB-UniRule"/>
</dbReference>
<dbReference type="GO" id="GO:0003735">
    <property type="term" value="F:structural constituent of ribosome"/>
    <property type="evidence" value="ECO:0007669"/>
    <property type="project" value="InterPro"/>
</dbReference>
<dbReference type="GO" id="GO:0016740">
    <property type="term" value="F:transferase activity"/>
    <property type="evidence" value="ECO:0007669"/>
    <property type="project" value="InterPro"/>
</dbReference>
<dbReference type="GO" id="GO:0002181">
    <property type="term" value="P:cytoplasmic translation"/>
    <property type="evidence" value="ECO:0007669"/>
    <property type="project" value="TreeGrafter"/>
</dbReference>
<dbReference type="FunFam" id="2.30.30.30:FF:000001">
    <property type="entry name" value="50S ribosomal protein L2"/>
    <property type="match status" value="1"/>
</dbReference>
<dbReference type="FunFam" id="2.40.50.140:FF:000003">
    <property type="entry name" value="50S ribosomal protein L2"/>
    <property type="match status" value="1"/>
</dbReference>
<dbReference type="FunFam" id="4.10.950.10:FF:000001">
    <property type="entry name" value="50S ribosomal protein L2"/>
    <property type="match status" value="1"/>
</dbReference>
<dbReference type="Gene3D" id="2.30.30.30">
    <property type="match status" value="1"/>
</dbReference>
<dbReference type="Gene3D" id="2.40.50.140">
    <property type="entry name" value="Nucleic acid-binding proteins"/>
    <property type="match status" value="1"/>
</dbReference>
<dbReference type="Gene3D" id="4.10.950.10">
    <property type="entry name" value="Ribosomal protein L2, domain 3"/>
    <property type="match status" value="1"/>
</dbReference>
<dbReference type="HAMAP" id="MF_01320_B">
    <property type="entry name" value="Ribosomal_uL2_B"/>
    <property type="match status" value="1"/>
</dbReference>
<dbReference type="InterPro" id="IPR012340">
    <property type="entry name" value="NA-bd_OB-fold"/>
</dbReference>
<dbReference type="InterPro" id="IPR014722">
    <property type="entry name" value="Rib_uL2_dom2"/>
</dbReference>
<dbReference type="InterPro" id="IPR002171">
    <property type="entry name" value="Ribosomal_uL2"/>
</dbReference>
<dbReference type="InterPro" id="IPR005880">
    <property type="entry name" value="Ribosomal_uL2_bac/org-type"/>
</dbReference>
<dbReference type="InterPro" id="IPR022669">
    <property type="entry name" value="Ribosomal_uL2_C"/>
</dbReference>
<dbReference type="InterPro" id="IPR022671">
    <property type="entry name" value="Ribosomal_uL2_CS"/>
</dbReference>
<dbReference type="InterPro" id="IPR014726">
    <property type="entry name" value="Ribosomal_uL2_dom3"/>
</dbReference>
<dbReference type="InterPro" id="IPR022666">
    <property type="entry name" value="Ribosomal_uL2_RNA-bd_dom"/>
</dbReference>
<dbReference type="InterPro" id="IPR008991">
    <property type="entry name" value="Translation_prot_SH3-like_sf"/>
</dbReference>
<dbReference type="NCBIfam" id="TIGR01171">
    <property type="entry name" value="rplB_bact"/>
    <property type="match status" value="1"/>
</dbReference>
<dbReference type="PANTHER" id="PTHR13691:SF5">
    <property type="entry name" value="LARGE RIBOSOMAL SUBUNIT PROTEIN UL2M"/>
    <property type="match status" value="1"/>
</dbReference>
<dbReference type="PANTHER" id="PTHR13691">
    <property type="entry name" value="RIBOSOMAL PROTEIN L2"/>
    <property type="match status" value="1"/>
</dbReference>
<dbReference type="Pfam" id="PF00181">
    <property type="entry name" value="Ribosomal_L2"/>
    <property type="match status" value="1"/>
</dbReference>
<dbReference type="Pfam" id="PF03947">
    <property type="entry name" value="Ribosomal_L2_C"/>
    <property type="match status" value="1"/>
</dbReference>
<dbReference type="PIRSF" id="PIRSF002158">
    <property type="entry name" value="Ribosomal_L2"/>
    <property type="match status" value="1"/>
</dbReference>
<dbReference type="SMART" id="SM01383">
    <property type="entry name" value="Ribosomal_L2"/>
    <property type="match status" value="1"/>
</dbReference>
<dbReference type="SMART" id="SM01382">
    <property type="entry name" value="Ribosomal_L2_C"/>
    <property type="match status" value="1"/>
</dbReference>
<dbReference type="SUPFAM" id="SSF50249">
    <property type="entry name" value="Nucleic acid-binding proteins"/>
    <property type="match status" value="1"/>
</dbReference>
<dbReference type="SUPFAM" id="SSF50104">
    <property type="entry name" value="Translation proteins SH3-like domain"/>
    <property type="match status" value="1"/>
</dbReference>
<dbReference type="PROSITE" id="PS00467">
    <property type="entry name" value="RIBOSOMAL_L2"/>
    <property type="match status" value="1"/>
</dbReference>
<accession>Q487Z6</accession>
<protein>
    <recommendedName>
        <fullName evidence="1">Large ribosomal subunit protein uL2</fullName>
    </recommendedName>
    <alternativeName>
        <fullName evidence="3">50S ribosomal protein L2</fullName>
    </alternativeName>
</protein>
<evidence type="ECO:0000255" key="1">
    <source>
        <dbReference type="HAMAP-Rule" id="MF_01320"/>
    </source>
</evidence>
<evidence type="ECO:0000256" key="2">
    <source>
        <dbReference type="SAM" id="MobiDB-lite"/>
    </source>
</evidence>
<evidence type="ECO:0000305" key="3"/>
<reference key="1">
    <citation type="journal article" date="2005" name="Proc. Natl. Acad. Sci. U.S.A.">
        <title>The psychrophilic lifestyle as revealed by the genome sequence of Colwellia psychrerythraea 34H through genomic and proteomic analyses.</title>
        <authorList>
            <person name="Methe B.A."/>
            <person name="Nelson K.E."/>
            <person name="Deming J.W."/>
            <person name="Momen B."/>
            <person name="Melamud E."/>
            <person name="Zhang X."/>
            <person name="Moult J."/>
            <person name="Madupu R."/>
            <person name="Nelson W.C."/>
            <person name="Dodson R.J."/>
            <person name="Brinkac L.M."/>
            <person name="Daugherty S.C."/>
            <person name="Durkin A.S."/>
            <person name="DeBoy R.T."/>
            <person name="Kolonay J.F."/>
            <person name="Sullivan S.A."/>
            <person name="Zhou L."/>
            <person name="Davidsen T.M."/>
            <person name="Wu M."/>
            <person name="Huston A.L."/>
            <person name="Lewis M."/>
            <person name="Weaver B."/>
            <person name="Weidman J.F."/>
            <person name="Khouri H."/>
            <person name="Utterback T.R."/>
            <person name="Feldblyum T.V."/>
            <person name="Fraser C.M."/>
        </authorList>
    </citation>
    <scope>NUCLEOTIDE SEQUENCE [LARGE SCALE GENOMIC DNA]</scope>
    <source>
        <strain>34H / ATCC BAA-681</strain>
    </source>
</reference>
<feature type="chain" id="PRO_0000237174" description="Large ribosomal subunit protein uL2">
    <location>
        <begin position="1"/>
        <end position="274"/>
    </location>
</feature>
<feature type="region of interest" description="Disordered" evidence="2">
    <location>
        <begin position="223"/>
        <end position="274"/>
    </location>
</feature>